<accession>A0QRI8</accession>
<protein>
    <recommendedName>
        <fullName evidence="3">Menaquinone reductase</fullName>
        <shortName evidence="3">MK reductase</shortName>
        <ecNumber evidence="2">1.3.99.38</ecNumber>
    </recommendedName>
</protein>
<proteinExistence type="evidence at protein level"/>
<reference key="1">
    <citation type="submission" date="2006-10" db="EMBL/GenBank/DDBJ databases">
        <authorList>
            <person name="Fleischmann R.D."/>
            <person name="Dodson R.J."/>
            <person name="Haft D.H."/>
            <person name="Merkel J.S."/>
            <person name="Nelson W.C."/>
            <person name="Fraser C.M."/>
        </authorList>
    </citation>
    <scope>NUCLEOTIDE SEQUENCE [LARGE SCALE GENOMIC DNA]</scope>
    <source>
        <strain>ATCC 700084 / mc(2)155</strain>
    </source>
</reference>
<reference key="2">
    <citation type="journal article" date="2007" name="Genome Biol.">
        <title>Interrupted coding sequences in Mycobacterium smegmatis: authentic mutations or sequencing errors?</title>
        <authorList>
            <person name="Deshayes C."/>
            <person name="Perrodou E."/>
            <person name="Gallien S."/>
            <person name="Euphrasie D."/>
            <person name="Schaeffer C."/>
            <person name="Van-Dorsselaer A."/>
            <person name="Poch O."/>
            <person name="Lecompte O."/>
            <person name="Reyrat J.-M."/>
        </authorList>
    </citation>
    <scope>NUCLEOTIDE SEQUENCE [LARGE SCALE GENOMIC DNA]</scope>
    <source>
        <strain>ATCC 700084 / mc(2)155</strain>
    </source>
</reference>
<reference key="3">
    <citation type="journal article" date="2009" name="Genome Res.">
        <title>Ortho-proteogenomics: multiple proteomes investigation through orthology and a new MS-based protocol.</title>
        <authorList>
            <person name="Gallien S."/>
            <person name="Perrodou E."/>
            <person name="Carapito C."/>
            <person name="Deshayes C."/>
            <person name="Reyrat J.-M."/>
            <person name="Van Dorsselaer A."/>
            <person name="Poch O."/>
            <person name="Schaeffer C."/>
            <person name="Lecompte O."/>
        </authorList>
    </citation>
    <scope>NUCLEOTIDE SEQUENCE [LARGE SCALE GENOMIC DNA]</scope>
    <source>
        <strain>ATCC 700084 / mc(2)155</strain>
    </source>
</reference>
<reference key="4">
    <citation type="journal article" date="2015" name="ACS Cent. Sci.">
        <title>Partial saturation of menaquinone in Mycobacterium tuberculosis: function and essentiality of a novel reductase, MenJ.</title>
        <authorList>
            <person name="Upadhyay A."/>
            <person name="Fontes F.L."/>
            <person name="Gonzalez-Juarrero M."/>
            <person name="McNeil M.R."/>
            <person name="Crans D.C."/>
            <person name="Jackson M."/>
            <person name="Crick D.C."/>
        </authorList>
    </citation>
    <scope>IDENTIFICATION</scope>
    <scope>FUNCTION</scope>
    <scope>CATALYTIC ACTIVITY</scope>
    <scope>DISRUPTION PHENOTYPE</scope>
    <scope>PATHWAY</scope>
    <source>
        <strain>ATCC 700084 / mc(2)155</strain>
    </source>
</reference>
<feature type="chain" id="PRO_0000435885" description="Menaquinone reductase">
    <location>
        <begin position="1"/>
        <end position="409"/>
    </location>
</feature>
<feature type="binding site" evidence="1">
    <location>
        <begin position="11"/>
        <end position="15"/>
    </location>
    <ligand>
        <name>FAD</name>
        <dbReference type="ChEBI" id="CHEBI:57692"/>
    </ligand>
</feature>
<feature type="binding site" evidence="1">
    <location>
        <begin position="44"/>
        <end position="47"/>
    </location>
    <ligand>
        <name>FAD</name>
        <dbReference type="ChEBI" id="CHEBI:57692"/>
    </ligand>
</feature>
<feature type="binding site" evidence="1">
    <location>
        <position position="101"/>
    </location>
    <ligand>
        <name>FAD</name>
        <dbReference type="ChEBI" id="CHEBI:57692"/>
    </ligand>
</feature>
<feature type="binding site" evidence="1">
    <location>
        <position position="125"/>
    </location>
    <ligand>
        <name>FAD</name>
        <dbReference type="ChEBI" id="CHEBI:57692"/>
    </ligand>
</feature>
<feature type="binding site" evidence="1">
    <location>
        <position position="288"/>
    </location>
    <ligand>
        <name>FAD</name>
        <dbReference type="ChEBI" id="CHEBI:57692"/>
    </ligand>
</feature>
<feature type="binding site" evidence="1">
    <location>
        <begin position="300"/>
        <end position="301"/>
    </location>
    <ligand>
        <name>FAD</name>
        <dbReference type="ChEBI" id="CHEBI:57692"/>
    </ligand>
</feature>
<name>MENJ_MYCS2</name>
<gene>
    <name evidence="3" type="primary">menJ</name>
    <name evidence="5" type="ordered locus">MSMEG_1132</name>
    <name evidence="6" type="ordered locus">MSMEI_1100</name>
</gene>
<comment type="function">
    <text evidence="2">Catalyzes the reduction of a single double bond in the isoprenoid tail of menaquinone (MK-9) in M.smegmatis, likely the beta-isoprene unit, forming the predominant form of menaquinone found in mycobacteria, MK-9(II-H2).</text>
</comment>
<comment type="catalytic activity">
    <reaction evidence="2">
        <text>menaquinone-9 + AH2 = beta-dihydromenaquinone-9 + A</text>
        <dbReference type="Rhea" id="RHEA:51924"/>
        <dbReference type="ChEBI" id="CHEBI:13193"/>
        <dbReference type="ChEBI" id="CHEBI:17499"/>
        <dbReference type="ChEBI" id="CHEBI:44147"/>
        <dbReference type="ChEBI" id="CHEBI:134607"/>
        <dbReference type="EC" id="1.3.99.38"/>
    </reaction>
</comment>
<comment type="cofactor">
    <cofactor evidence="1">
        <name>FAD</name>
        <dbReference type="ChEBI" id="CHEBI:57692"/>
    </cofactor>
</comment>
<comment type="pathway">
    <text evidence="2">Quinol/quinone metabolism; menaquinone biosynthesis.</text>
</comment>
<comment type="disruption phenotype">
    <text evidence="2">Cells lacking this gene show complete abolition of the synthesis of MK-9(II-H2) accompanied by accumulation of MK-9. They have similar growth rates than wild-type in both aerated and hypoxic culture conditions. However, mycobacterial electron transport efficiency is reduced by 3-fold in mutant cells, but mycobacteria are able to maintain ATP levels by increasing the levels of the total menaquinone in the membrane. Proton motive force (PMF) and oxidative phosphorylation are not affected.</text>
</comment>
<comment type="similarity">
    <text evidence="4">Belongs to the geranylgeranyl reductase family.</text>
</comment>
<dbReference type="EC" id="1.3.99.38" evidence="2"/>
<dbReference type="EMBL" id="CP000480">
    <property type="protein sequence ID" value="ABK72592.1"/>
    <property type="molecule type" value="Genomic_DNA"/>
</dbReference>
<dbReference type="EMBL" id="CP001663">
    <property type="protein sequence ID" value="AFP37578.1"/>
    <property type="molecule type" value="Genomic_DNA"/>
</dbReference>
<dbReference type="RefSeq" id="WP_011727437.1">
    <property type="nucleotide sequence ID" value="NZ_SIJM01000011.1"/>
</dbReference>
<dbReference type="RefSeq" id="YP_885526.1">
    <property type="nucleotide sequence ID" value="NC_008596.1"/>
</dbReference>
<dbReference type="SMR" id="A0QRI8"/>
<dbReference type="STRING" id="246196.MSMEG_1132"/>
<dbReference type="PaxDb" id="246196-MSMEI_1100"/>
<dbReference type="GeneID" id="93455977"/>
<dbReference type="KEGG" id="msb:LJ00_05635"/>
<dbReference type="KEGG" id="msg:MSMEI_1100"/>
<dbReference type="KEGG" id="msm:MSMEG_1132"/>
<dbReference type="PATRIC" id="fig|246196.19.peg.1124"/>
<dbReference type="eggNOG" id="COG0644">
    <property type="taxonomic scope" value="Bacteria"/>
</dbReference>
<dbReference type="OrthoDB" id="9795712at2"/>
<dbReference type="BRENDA" id="1.3.99.38">
    <property type="organism ID" value="3512"/>
</dbReference>
<dbReference type="UniPathway" id="UPA00079"/>
<dbReference type="Proteomes" id="UP000000757">
    <property type="component" value="Chromosome"/>
</dbReference>
<dbReference type="Proteomes" id="UP000006158">
    <property type="component" value="Chromosome"/>
</dbReference>
<dbReference type="GO" id="GO:0071949">
    <property type="term" value="F:FAD binding"/>
    <property type="evidence" value="ECO:0007669"/>
    <property type="project" value="InterPro"/>
</dbReference>
<dbReference type="GO" id="GO:0016627">
    <property type="term" value="F:oxidoreductase activity, acting on the CH-CH group of donors"/>
    <property type="evidence" value="ECO:0000315"/>
    <property type="project" value="UniProtKB"/>
</dbReference>
<dbReference type="GO" id="GO:0016628">
    <property type="term" value="F:oxidoreductase activity, acting on the CH-CH group of donors, NAD or NADP as acceptor"/>
    <property type="evidence" value="ECO:0007669"/>
    <property type="project" value="InterPro"/>
</dbReference>
<dbReference type="GO" id="GO:0009234">
    <property type="term" value="P:menaquinone biosynthetic process"/>
    <property type="evidence" value="ECO:0000315"/>
    <property type="project" value="UniProtKB"/>
</dbReference>
<dbReference type="Gene3D" id="3.50.50.60">
    <property type="entry name" value="FAD/NAD(P)-binding domain"/>
    <property type="match status" value="1"/>
</dbReference>
<dbReference type="InterPro" id="IPR002938">
    <property type="entry name" value="FAD-bd"/>
</dbReference>
<dbReference type="InterPro" id="IPR036188">
    <property type="entry name" value="FAD/NAD-bd_sf"/>
</dbReference>
<dbReference type="InterPro" id="IPR011777">
    <property type="entry name" value="Geranylgeranyl_Rdtase_fam"/>
</dbReference>
<dbReference type="InterPro" id="IPR050407">
    <property type="entry name" value="Geranylgeranyl_reductase"/>
</dbReference>
<dbReference type="InterPro" id="IPR054880">
    <property type="entry name" value="MkRedMenJ"/>
</dbReference>
<dbReference type="NCBIfam" id="TIGR02032">
    <property type="entry name" value="GG-red-SF"/>
    <property type="match status" value="1"/>
</dbReference>
<dbReference type="NCBIfam" id="NF045655">
    <property type="entry name" value="MkRedMenJ"/>
    <property type="match status" value="1"/>
</dbReference>
<dbReference type="PANTHER" id="PTHR42685:SF22">
    <property type="entry name" value="CONDITIONED MEDIUM FACTOR RECEPTOR 1"/>
    <property type="match status" value="1"/>
</dbReference>
<dbReference type="PANTHER" id="PTHR42685">
    <property type="entry name" value="GERANYLGERANYL DIPHOSPHATE REDUCTASE"/>
    <property type="match status" value="1"/>
</dbReference>
<dbReference type="Pfam" id="PF01494">
    <property type="entry name" value="FAD_binding_3"/>
    <property type="match status" value="1"/>
</dbReference>
<dbReference type="PRINTS" id="PR00420">
    <property type="entry name" value="RNGMNOXGNASE"/>
</dbReference>
<dbReference type="SUPFAM" id="SSF51905">
    <property type="entry name" value="FAD/NAD(P)-binding domain"/>
    <property type="match status" value="1"/>
</dbReference>
<keyword id="KW-0274">FAD</keyword>
<keyword id="KW-0285">Flavoprotein</keyword>
<keyword id="KW-0474">Menaquinone biosynthesis</keyword>
<keyword id="KW-0560">Oxidoreductase</keyword>
<keyword id="KW-1185">Reference proteome</keyword>
<organism>
    <name type="scientific">Mycolicibacterium smegmatis (strain ATCC 700084 / mc(2)155)</name>
    <name type="common">Mycobacterium smegmatis</name>
    <dbReference type="NCBI Taxonomy" id="246196"/>
    <lineage>
        <taxon>Bacteria</taxon>
        <taxon>Bacillati</taxon>
        <taxon>Actinomycetota</taxon>
        <taxon>Actinomycetes</taxon>
        <taxon>Mycobacteriales</taxon>
        <taxon>Mycobacteriaceae</taxon>
        <taxon>Mycolicibacterium</taxon>
    </lineage>
</organism>
<evidence type="ECO:0000250" key="1">
    <source>
        <dbReference type="UniProtKB" id="Q9HKS9"/>
    </source>
</evidence>
<evidence type="ECO:0000269" key="2">
    <source>
    </source>
</evidence>
<evidence type="ECO:0000303" key="3">
    <source>
    </source>
</evidence>
<evidence type="ECO:0000305" key="4"/>
<evidence type="ECO:0000312" key="5">
    <source>
        <dbReference type="EMBL" id="ABK72592.1"/>
    </source>
</evidence>
<evidence type="ECO:0000312" key="6">
    <source>
        <dbReference type="EMBL" id="AFP37578.1"/>
    </source>
</evidence>
<sequence length="409" mass="43404">MNTRADVVVVGAGPAGSAAAAWAARAGRDVVVVDAAQFPRDKACGDGLTPRAVAELQRLGMASWLDTRIRHHGLRMSGFGADVEIPWPGPSFPATSSAVPRTELDDRIRSVAADDGAKMMLGTKVVDVTHDSSGRVDAVVLDDGNTVGCAQLIVADGARSTLGRVLGRTWHRETVYGVAIRGYIASPRASEPWITSHLELRSPEGKVLPGYGWMFPLGNGEVNIGVGALATAKRPADAALRPLMSYYADLRREEWGLVGEPRAGLSALLPMGGAVSGVAGPNWMLIGDAAACVNPLNGEGIDYGLETGRLAAELMTSGGVTDYSSAWPTLLQEHYARGFSVARRLALLLTLPRFLQVTGPVAMRSATLMTIAVRVMGNLVTDEDADWIARVWRTAGLASRRIDQRVPFS</sequence>